<sequence length="174" mass="18895">MTTIVSVRRDGHVVIGGDGQVTLGNTVMKGNAKKVRRLYNNKVIAGFAGGTADAFTLFELFERKLEMHQGHLTKAAVELAKDWRTDRMLRKLEALLAVADETASLIITGNGDVVQPEDDLIAIGSGGPYAQSAARALLENTELGARDIVEKSLSIAGDICIYTNRFQTIEELTY</sequence>
<comment type="function">
    <text evidence="2">Protease subunit of a proteasome-like degradation complex believed to be a general protein degrading machinery.</text>
</comment>
<comment type="catalytic activity">
    <reaction evidence="2">
        <text>ATP-dependent cleavage of peptide bonds with broad specificity.</text>
        <dbReference type="EC" id="3.4.25.2"/>
    </reaction>
</comment>
<comment type="activity regulation">
    <text evidence="2">Allosterically activated by HslU binding.</text>
</comment>
<comment type="subunit">
    <text evidence="2">A double ring-shaped homohexamer of HslV is capped on each side by a ring-shaped HslU homohexamer. The assembly of the HslU/HslV complex is dependent on binding of ATP.</text>
</comment>
<comment type="subcellular location">
    <subcellularLocation>
        <location evidence="2">Cytoplasm</location>
    </subcellularLocation>
</comment>
<comment type="similarity">
    <text evidence="2">Belongs to the peptidase T1B family. HslV subfamily.</text>
</comment>
<gene>
    <name evidence="2" type="primary">hslV</name>
    <name type="ordered locus">YPTB0098</name>
</gene>
<reference key="1">
    <citation type="journal article" date="2004" name="Proc. Natl. Acad. Sci. U.S.A.">
        <title>Insights into the evolution of Yersinia pestis through whole-genome comparison with Yersinia pseudotuberculosis.</title>
        <authorList>
            <person name="Chain P.S.G."/>
            <person name="Carniel E."/>
            <person name="Larimer F.W."/>
            <person name="Lamerdin J."/>
            <person name="Stoutland P.O."/>
            <person name="Regala W.M."/>
            <person name="Georgescu A.M."/>
            <person name="Vergez L.M."/>
            <person name="Land M.L."/>
            <person name="Motin V.L."/>
            <person name="Brubaker R.R."/>
            <person name="Fowler J."/>
            <person name="Hinnebusch J."/>
            <person name="Marceau M."/>
            <person name="Medigue C."/>
            <person name="Simonet M."/>
            <person name="Chenal-Francisque V."/>
            <person name="Souza B."/>
            <person name="Dacheux D."/>
            <person name="Elliott J.M."/>
            <person name="Derbise A."/>
            <person name="Hauser L.J."/>
            <person name="Garcia E."/>
        </authorList>
    </citation>
    <scope>NUCLEOTIDE SEQUENCE [LARGE SCALE GENOMIC DNA]</scope>
    <source>
        <strain>IP32953</strain>
    </source>
</reference>
<accession>Q66G84</accession>
<proteinExistence type="inferred from homology"/>
<feature type="initiator methionine" description="Removed" evidence="1">
    <location>
        <position position="1"/>
    </location>
</feature>
<feature type="chain" id="PRO_0000148169" description="ATP-dependent protease subunit HslV">
    <location>
        <begin position="2"/>
        <end position="174"/>
    </location>
</feature>
<feature type="active site" evidence="2">
    <location>
        <position position="2"/>
    </location>
</feature>
<feature type="binding site" evidence="2">
    <location>
        <position position="157"/>
    </location>
    <ligand>
        <name>Na(+)</name>
        <dbReference type="ChEBI" id="CHEBI:29101"/>
    </ligand>
</feature>
<feature type="binding site" evidence="2">
    <location>
        <position position="160"/>
    </location>
    <ligand>
        <name>Na(+)</name>
        <dbReference type="ChEBI" id="CHEBI:29101"/>
    </ligand>
</feature>
<feature type="binding site" evidence="2">
    <location>
        <position position="163"/>
    </location>
    <ligand>
        <name>Na(+)</name>
        <dbReference type="ChEBI" id="CHEBI:29101"/>
    </ligand>
</feature>
<evidence type="ECO:0000250" key="1"/>
<evidence type="ECO:0000255" key="2">
    <source>
        <dbReference type="HAMAP-Rule" id="MF_00248"/>
    </source>
</evidence>
<organism>
    <name type="scientific">Yersinia pseudotuberculosis serotype I (strain IP32953)</name>
    <dbReference type="NCBI Taxonomy" id="273123"/>
    <lineage>
        <taxon>Bacteria</taxon>
        <taxon>Pseudomonadati</taxon>
        <taxon>Pseudomonadota</taxon>
        <taxon>Gammaproteobacteria</taxon>
        <taxon>Enterobacterales</taxon>
        <taxon>Yersiniaceae</taxon>
        <taxon>Yersinia</taxon>
    </lineage>
</organism>
<protein>
    <recommendedName>
        <fullName evidence="2">ATP-dependent protease subunit HslV</fullName>
        <ecNumber evidence="2">3.4.25.2</ecNumber>
    </recommendedName>
</protein>
<dbReference type="EC" id="3.4.25.2" evidence="2"/>
<dbReference type="EMBL" id="BX936398">
    <property type="protein sequence ID" value="CAH19338.1"/>
    <property type="molecule type" value="Genomic_DNA"/>
</dbReference>
<dbReference type="RefSeq" id="WP_002208942.1">
    <property type="nucleotide sequence ID" value="NZ_CP009712.1"/>
</dbReference>
<dbReference type="SMR" id="Q66G84"/>
<dbReference type="MEROPS" id="T01.006"/>
<dbReference type="GeneID" id="97458253"/>
<dbReference type="KEGG" id="ypo:BZ17_2499"/>
<dbReference type="KEGG" id="yps:YPTB0098"/>
<dbReference type="PATRIC" id="fig|273123.14.peg.2620"/>
<dbReference type="Proteomes" id="UP000001011">
    <property type="component" value="Chromosome"/>
</dbReference>
<dbReference type="GO" id="GO:0009376">
    <property type="term" value="C:HslUV protease complex"/>
    <property type="evidence" value="ECO:0007669"/>
    <property type="project" value="UniProtKB-UniRule"/>
</dbReference>
<dbReference type="GO" id="GO:0005839">
    <property type="term" value="C:proteasome core complex"/>
    <property type="evidence" value="ECO:0007669"/>
    <property type="project" value="InterPro"/>
</dbReference>
<dbReference type="GO" id="GO:0046872">
    <property type="term" value="F:metal ion binding"/>
    <property type="evidence" value="ECO:0007669"/>
    <property type="project" value="UniProtKB-KW"/>
</dbReference>
<dbReference type="GO" id="GO:0004298">
    <property type="term" value="F:threonine-type endopeptidase activity"/>
    <property type="evidence" value="ECO:0007669"/>
    <property type="project" value="UniProtKB-KW"/>
</dbReference>
<dbReference type="GO" id="GO:0051603">
    <property type="term" value="P:proteolysis involved in protein catabolic process"/>
    <property type="evidence" value="ECO:0007669"/>
    <property type="project" value="InterPro"/>
</dbReference>
<dbReference type="CDD" id="cd01913">
    <property type="entry name" value="protease_HslV"/>
    <property type="match status" value="1"/>
</dbReference>
<dbReference type="FunFam" id="3.60.20.10:FF:000002">
    <property type="entry name" value="ATP-dependent protease subunit HslV"/>
    <property type="match status" value="1"/>
</dbReference>
<dbReference type="Gene3D" id="3.60.20.10">
    <property type="entry name" value="Glutamine Phosphoribosylpyrophosphate, subunit 1, domain 1"/>
    <property type="match status" value="1"/>
</dbReference>
<dbReference type="HAMAP" id="MF_00248">
    <property type="entry name" value="HslV"/>
    <property type="match status" value="1"/>
</dbReference>
<dbReference type="InterPro" id="IPR022281">
    <property type="entry name" value="ATP-dep_Prtase_HsIV_su"/>
</dbReference>
<dbReference type="InterPro" id="IPR029055">
    <property type="entry name" value="Ntn_hydrolases_N"/>
</dbReference>
<dbReference type="InterPro" id="IPR001353">
    <property type="entry name" value="Proteasome_sua/b"/>
</dbReference>
<dbReference type="InterPro" id="IPR023333">
    <property type="entry name" value="Proteasome_suB-type"/>
</dbReference>
<dbReference type="NCBIfam" id="TIGR03692">
    <property type="entry name" value="ATP_dep_HslV"/>
    <property type="match status" value="1"/>
</dbReference>
<dbReference type="NCBIfam" id="NF003964">
    <property type="entry name" value="PRK05456.1"/>
    <property type="match status" value="1"/>
</dbReference>
<dbReference type="PANTHER" id="PTHR32194:SF0">
    <property type="entry name" value="ATP-DEPENDENT PROTEASE SUBUNIT HSLV"/>
    <property type="match status" value="1"/>
</dbReference>
<dbReference type="PANTHER" id="PTHR32194">
    <property type="entry name" value="METALLOPROTEASE TLDD"/>
    <property type="match status" value="1"/>
</dbReference>
<dbReference type="Pfam" id="PF00227">
    <property type="entry name" value="Proteasome"/>
    <property type="match status" value="1"/>
</dbReference>
<dbReference type="PIRSF" id="PIRSF039093">
    <property type="entry name" value="HslV"/>
    <property type="match status" value="1"/>
</dbReference>
<dbReference type="SUPFAM" id="SSF56235">
    <property type="entry name" value="N-terminal nucleophile aminohydrolases (Ntn hydrolases)"/>
    <property type="match status" value="1"/>
</dbReference>
<dbReference type="PROSITE" id="PS51476">
    <property type="entry name" value="PROTEASOME_BETA_2"/>
    <property type="match status" value="1"/>
</dbReference>
<keyword id="KW-0021">Allosteric enzyme</keyword>
<keyword id="KW-0963">Cytoplasm</keyword>
<keyword id="KW-0378">Hydrolase</keyword>
<keyword id="KW-0479">Metal-binding</keyword>
<keyword id="KW-0645">Protease</keyword>
<keyword id="KW-0915">Sodium</keyword>
<keyword id="KW-0888">Threonine protease</keyword>
<name>HSLV_YERPS</name>